<proteinExistence type="inferred from homology"/>
<name>ATPH_CRYJA</name>
<feature type="chain" id="PRO_0000362904" description="ATP synthase subunit c, chloroplastic">
    <location>
        <begin position="1"/>
        <end position="81"/>
    </location>
</feature>
<feature type="transmembrane region" description="Helical" evidence="1">
    <location>
        <begin position="7"/>
        <end position="27"/>
    </location>
</feature>
<feature type="transmembrane region" description="Helical" evidence="1">
    <location>
        <begin position="57"/>
        <end position="77"/>
    </location>
</feature>
<feature type="site" description="Reversibly protonated during proton transport" evidence="1">
    <location>
        <position position="61"/>
    </location>
</feature>
<geneLocation type="chloroplast"/>
<keyword id="KW-0066">ATP synthesis</keyword>
<keyword id="KW-0138">CF(0)</keyword>
<keyword id="KW-0150">Chloroplast</keyword>
<keyword id="KW-0375">Hydrogen ion transport</keyword>
<keyword id="KW-0406">Ion transport</keyword>
<keyword id="KW-0446">Lipid-binding</keyword>
<keyword id="KW-0472">Membrane</keyword>
<keyword id="KW-0934">Plastid</keyword>
<keyword id="KW-0793">Thylakoid</keyword>
<keyword id="KW-0812">Transmembrane</keyword>
<keyword id="KW-1133">Transmembrane helix</keyword>
<keyword id="KW-0813">Transport</keyword>
<reference key="1">
    <citation type="journal article" date="2008" name="BMC Plant Biol.">
        <title>Complete nucleotide sequence of the Cryptomeria japonica D. Don. chloroplast genome and comparative chloroplast genomics: diversified genomic structure of coniferous species.</title>
        <authorList>
            <person name="Hirao T."/>
            <person name="Watanabe A."/>
            <person name="Kurita M."/>
            <person name="Kondo T."/>
            <person name="Takata K."/>
        </authorList>
    </citation>
    <scope>NUCLEOTIDE SEQUENCE [LARGE SCALE GENOMIC DNA]</scope>
</reference>
<gene>
    <name evidence="1" type="primary">atpH</name>
</gene>
<comment type="function">
    <text evidence="1">F(1)F(0) ATP synthase produces ATP from ADP in the presence of a proton or sodium gradient. F-type ATPases consist of two structural domains, F(1) containing the extramembraneous catalytic core and F(0) containing the membrane proton channel, linked together by a central stalk and a peripheral stalk. During catalysis, ATP synthesis in the catalytic domain of F(1) is coupled via a rotary mechanism of the central stalk subunits to proton translocation.</text>
</comment>
<comment type="function">
    <text evidence="1">Key component of the F(0) channel; it plays a direct role in translocation across the membrane. A homomeric c-ring of between 10-14 subunits forms the central stalk rotor element with the F(1) delta and epsilon subunits.</text>
</comment>
<comment type="subunit">
    <text evidence="1">F-type ATPases have 2 components, F(1) - the catalytic core - and F(0) - the membrane proton channel. F(1) has five subunits: alpha(3), beta(3), gamma(1), delta(1), epsilon(1). F(0) has four main subunits: a(1), b(1), b'(1) and c(10-14). The alpha and beta chains form an alternating ring which encloses part of the gamma chain. F(1) is attached to F(0) by a central stalk formed by the gamma and epsilon chains, while a peripheral stalk is formed by the delta, b and b' chains.</text>
</comment>
<comment type="subcellular location">
    <subcellularLocation>
        <location evidence="1">Plastid</location>
        <location evidence="1">Chloroplast thylakoid membrane</location>
        <topology evidence="1">Multi-pass membrane protein</topology>
    </subcellularLocation>
</comment>
<comment type="miscellaneous">
    <text>In plastids the F-type ATPase is also known as CF(1)CF(0).</text>
</comment>
<comment type="similarity">
    <text evidence="1">Belongs to the ATPase C chain family.</text>
</comment>
<accession>B1VKH8</accession>
<dbReference type="EMBL" id="AP009377">
    <property type="protein sequence ID" value="BAG16689.1"/>
    <property type="molecule type" value="Genomic_DNA"/>
</dbReference>
<dbReference type="RefSeq" id="YP_001806691.1">
    <property type="nucleotide sequence ID" value="NC_010548.1"/>
</dbReference>
<dbReference type="SMR" id="B1VKH8"/>
<dbReference type="GeneID" id="6166584"/>
<dbReference type="KEGG" id="cjf:6166584"/>
<dbReference type="OrthoDB" id="438052at2759"/>
<dbReference type="GO" id="GO:0009535">
    <property type="term" value="C:chloroplast thylakoid membrane"/>
    <property type="evidence" value="ECO:0007669"/>
    <property type="project" value="UniProtKB-SubCell"/>
</dbReference>
<dbReference type="GO" id="GO:0045259">
    <property type="term" value="C:proton-transporting ATP synthase complex"/>
    <property type="evidence" value="ECO:0007669"/>
    <property type="project" value="UniProtKB-KW"/>
</dbReference>
<dbReference type="GO" id="GO:0033177">
    <property type="term" value="C:proton-transporting two-sector ATPase complex, proton-transporting domain"/>
    <property type="evidence" value="ECO:0007669"/>
    <property type="project" value="InterPro"/>
</dbReference>
<dbReference type="GO" id="GO:0008289">
    <property type="term" value="F:lipid binding"/>
    <property type="evidence" value="ECO:0007669"/>
    <property type="project" value="UniProtKB-KW"/>
</dbReference>
<dbReference type="GO" id="GO:0046933">
    <property type="term" value="F:proton-transporting ATP synthase activity, rotational mechanism"/>
    <property type="evidence" value="ECO:0007669"/>
    <property type="project" value="UniProtKB-UniRule"/>
</dbReference>
<dbReference type="CDD" id="cd18183">
    <property type="entry name" value="ATP-synt_Fo_c_ATPH"/>
    <property type="match status" value="1"/>
</dbReference>
<dbReference type="FunFam" id="1.20.20.10:FF:000001">
    <property type="entry name" value="ATP synthase subunit c, chloroplastic"/>
    <property type="match status" value="1"/>
</dbReference>
<dbReference type="Gene3D" id="1.20.20.10">
    <property type="entry name" value="F1F0 ATP synthase subunit C"/>
    <property type="match status" value="1"/>
</dbReference>
<dbReference type="HAMAP" id="MF_01396">
    <property type="entry name" value="ATP_synth_c_bact"/>
    <property type="match status" value="1"/>
</dbReference>
<dbReference type="InterPro" id="IPR005953">
    <property type="entry name" value="ATP_synth_csu_bac/chlpt"/>
</dbReference>
<dbReference type="InterPro" id="IPR000454">
    <property type="entry name" value="ATP_synth_F0_csu"/>
</dbReference>
<dbReference type="InterPro" id="IPR020537">
    <property type="entry name" value="ATP_synth_F0_csu_DDCD_BS"/>
</dbReference>
<dbReference type="InterPro" id="IPR038662">
    <property type="entry name" value="ATP_synth_F0_csu_sf"/>
</dbReference>
<dbReference type="InterPro" id="IPR002379">
    <property type="entry name" value="ATPase_proteolipid_c-like_dom"/>
</dbReference>
<dbReference type="InterPro" id="IPR035921">
    <property type="entry name" value="F/V-ATP_Csub_sf"/>
</dbReference>
<dbReference type="NCBIfam" id="TIGR01260">
    <property type="entry name" value="ATP_synt_c"/>
    <property type="match status" value="1"/>
</dbReference>
<dbReference type="NCBIfam" id="NF005608">
    <property type="entry name" value="PRK07354.1"/>
    <property type="match status" value="1"/>
</dbReference>
<dbReference type="PANTHER" id="PTHR10031">
    <property type="entry name" value="ATP SYNTHASE LIPID-BINDING PROTEIN, MITOCHONDRIAL"/>
    <property type="match status" value="1"/>
</dbReference>
<dbReference type="PANTHER" id="PTHR10031:SF0">
    <property type="entry name" value="ATPASE PROTEIN 9"/>
    <property type="match status" value="1"/>
</dbReference>
<dbReference type="Pfam" id="PF00137">
    <property type="entry name" value="ATP-synt_C"/>
    <property type="match status" value="1"/>
</dbReference>
<dbReference type="PRINTS" id="PR00124">
    <property type="entry name" value="ATPASEC"/>
</dbReference>
<dbReference type="SUPFAM" id="SSF81333">
    <property type="entry name" value="F1F0 ATP synthase subunit C"/>
    <property type="match status" value="1"/>
</dbReference>
<dbReference type="PROSITE" id="PS00605">
    <property type="entry name" value="ATPASE_C"/>
    <property type="match status" value="1"/>
</dbReference>
<protein>
    <recommendedName>
        <fullName evidence="1">ATP synthase subunit c, chloroplastic</fullName>
    </recommendedName>
    <alternativeName>
        <fullName evidence="1">ATP synthase F(0) sector subunit c</fullName>
    </alternativeName>
    <alternativeName>
        <fullName evidence="1">ATPase subunit III</fullName>
    </alternativeName>
    <alternativeName>
        <fullName evidence="1">F-type ATPase subunit c</fullName>
        <shortName evidence="1">F-ATPase subunit c</shortName>
    </alternativeName>
    <alternativeName>
        <fullName evidence="1">Lipid-binding protein</fullName>
    </alternativeName>
</protein>
<organism>
    <name type="scientific">Cryptomeria japonica</name>
    <name type="common">Japanese cedar</name>
    <name type="synonym">Cupressus japonica</name>
    <dbReference type="NCBI Taxonomy" id="3369"/>
    <lineage>
        <taxon>Eukaryota</taxon>
        <taxon>Viridiplantae</taxon>
        <taxon>Streptophyta</taxon>
        <taxon>Embryophyta</taxon>
        <taxon>Tracheophyta</taxon>
        <taxon>Spermatophyta</taxon>
        <taxon>Pinopsida</taxon>
        <taxon>Pinidae</taxon>
        <taxon>Conifers II</taxon>
        <taxon>Cupressales</taxon>
        <taxon>Cupressaceae</taxon>
        <taxon>Cryptomeria</taxon>
    </lineage>
</organism>
<sequence length="81" mass="8020">MNPLISAASVIAAGLSVGLASIGPGIGQGTAAGQAVEGIARQPEAEGKIRGTLLLSLAFMEALTIYGLVVALALLFANPFV</sequence>
<evidence type="ECO:0000255" key="1">
    <source>
        <dbReference type="HAMAP-Rule" id="MF_01396"/>
    </source>
</evidence>